<keyword id="KW-0378">Hydrolase</keyword>
<keyword id="KW-1185">Reference proteome</keyword>
<keyword id="KW-0719">Serine esterase</keyword>
<accession>P76561</accession>
<accession>Q2MAI4</accession>
<sequence length="232" mass="24855">MKHDHFVVQSPDKPAQQLLLLFHGVGDNPVAMGEIGNWFAPLFPDALVVSVGGAEPSGNPAGRQWFSVQGITEDNRQARVDAIMPTFIETVRYWQKQSGVGANATALIGFSQGAIMVLESIKAEPGLASRVIAFNGRYASLPETASTATTIHLIHGGEDPVIDLAHAVAAQEALISAGGDVTLDIVEDLGHAIDNRSMQFALDHLRYTIPKHYFDEALSGGKPGDDDVIEMM</sequence>
<dbReference type="EC" id="3.1.-.-"/>
<dbReference type="EMBL" id="U00096">
    <property type="protein sequence ID" value="AAC75526.2"/>
    <property type="molecule type" value="Genomic_DNA"/>
</dbReference>
<dbReference type="EMBL" id="AP009048">
    <property type="protein sequence ID" value="BAE76722.1"/>
    <property type="molecule type" value="Genomic_DNA"/>
</dbReference>
<dbReference type="PIR" id="H65022">
    <property type="entry name" value="H65022"/>
</dbReference>
<dbReference type="RefSeq" id="NP_416968.2">
    <property type="nucleotide sequence ID" value="NC_000913.3"/>
</dbReference>
<dbReference type="RefSeq" id="WP_000679799.1">
    <property type="nucleotide sequence ID" value="NZ_LN832404.1"/>
</dbReference>
<dbReference type="SMR" id="P76561"/>
<dbReference type="BioGRID" id="4259532">
    <property type="interactions" value="5"/>
</dbReference>
<dbReference type="BioGRID" id="851887">
    <property type="interactions" value="1"/>
</dbReference>
<dbReference type="FunCoup" id="P76561">
    <property type="interactions" value="57"/>
</dbReference>
<dbReference type="IntAct" id="P76561">
    <property type="interactions" value="1"/>
</dbReference>
<dbReference type="STRING" id="511145.b2473"/>
<dbReference type="ESTHER" id="ecoli-ypfh">
    <property type="family name" value="LYsophospholipase_carboxylesterase"/>
</dbReference>
<dbReference type="MEROPS" id="S09.A43"/>
<dbReference type="jPOST" id="P76561"/>
<dbReference type="PaxDb" id="511145-b2473"/>
<dbReference type="EnsemblBacteria" id="AAC75526">
    <property type="protein sequence ID" value="AAC75526"/>
    <property type="gene ID" value="b2473"/>
</dbReference>
<dbReference type="GeneID" id="947571"/>
<dbReference type="KEGG" id="ecj:JW5396"/>
<dbReference type="KEGG" id="eco:b2473"/>
<dbReference type="KEGG" id="ecoc:C3026_13725"/>
<dbReference type="PATRIC" id="fig|1411691.4.peg.4266"/>
<dbReference type="EchoBASE" id="EB3947"/>
<dbReference type="eggNOG" id="COG0400">
    <property type="taxonomic scope" value="Bacteria"/>
</dbReference>
<dbReference type="HOGENOM" id="CLU_049413_5_2_6"/>
<dbReference type="InParanoid" id="P76561"/>
<dbReference type="OMA" id="DNPVSMG"/>
<dbReference type="OrthoDB" id="9801763at2"/>
<dbReference type="PhylomeDB" id="P76561"/>
<dbReference type="BioCyc" id="EcoCyc:G7296-MONOMER"/>
<dbReference type="BRENDA" id="3.1.2.2">
    <property type="organism ID" value="2026"/>
</dbReference>
<dbReference type="PRO" id="PR:P76561"/>
<dbReference type="Proteomes" id="UP000000625">
    <property type="component" value="Chromosome"/>
</dbReference>
<dbReference type="GO" id="GO:0106435">
    <property type="term" value="F:carboxylesterase activity"/>
    <property type="evidence" value="ECO:0000314"/>
    <property type="project" value="EcoCyc"/>
</dbReference>
<dbReference type="GO" id="GO:0016788">
    <property type="term" value="F:hydrolase activity, acting on ester bonds"/>
    <property type="evidence" value="ECO:0000314"/>
    <property type="project" value="EcoliWiki"/>
</dbReference>
<dbReference type="FunFam" id="3.40.50.1820:FF:000083">
    <property type="entry name" value="Esterase YpfH"/>
    <property type="match status" value="1"/>
</dbReference>
<dbReference type="Gene3D" id="3.40.50.1820">
    <property type="entry name" value="alpha/beta hydrolase"/>
    <property type="match status" value="1"/>
</dbReference>
<dbReference type="InterPro" id="IPR029058">
    <property type="entry name" value="AB_hydrolase_fold"/>
</dbReference>
<dbReference type="InterPro" id="IPR050565">
    <property type="entry name" value="LYPA1-2/EST-like"/>
</dbReference>
<dbReference type="InterPro" id="IPR003140">
    <property type="entry name" value="PLipase/COase/thioEstase"/>
</dbReference>
<dbReference type="NCBIfam" id="NF008525">
    <property type="entry name" value="PRK11460.1"/>
    <property type="match status" value="1"/>
</dbReference>
<dbReference type="PANTHER" id="PTHR10655:SF17">
    <property type="entry name" value="LYSOPHOSPHOLIPASE-LIKE PROTEIN 1"/>
    <property type="match status" value="1"/>
</dbReference>
<dbReference type="PANTHER" id="PTHR10655">
    <property type="entry name" value="LYSOPHOSPHOLIPASE-RELATED"/>
    <property type="match status" value="1"/>
</dbReference>
<dbReference type="Pfam" id="PF02230">
    <property type="entry name" value="Abhydrolase_2"/>
    <property type="match status" value="1"/>
</dbReference>
<dbReference type="SUPFAM" id="SSF53474">
    <property type="entry name" value="alpha/beta-Hydrolases"/>
    <property type="match status" value="1"/>
</dbReference>
<gene>
    <name type="primary">ypfH</name>
    <name type="ordered locus">b2473</name>
    <name type="ordered locus">JW5396</name>
</gene>
<reference key="1">
    <citation type="journal article" date="1997" name="Science">
        <title>The complete genome sequence of Escherichia coli K-12.</title>
        <authorList>
            <person name="Blattner F.R."/>
            <person name="Plunkett G. III"/>
            <person name="Bloch C.A."/>
            <person name="Perna N.T."/>
            <person name="Burland V."/>
            <person name="Riley M."/>
            <person name="Collado-Vides J."/>
            <person name="Glasner J.D."/>
            <person name="Rode C.K."/>
            <person name="Mayhew G.F."/>
            <person name="Gregor J."/>
            <person name="Davis N.W."/>
            <person name="Kirkpatrick H.A."/>
            <person name="Goeden M.A."/>
            <person name="Rose D.J."/>
            <person name="Mau B."/>
            <person name="Shao Y."/>
        </authorList>
    </citation>
    <scope>NUCLEOTIDE SEQUENCE [LARGE SCALE GENOMIC DNA]</scope>
    <source>
        <strain>K12 / MG1655 / ATCC 47076</strain>
    </source>
</reference>
<reference key="2">
    <citation type="journal article" date="2006" name="Mol. Syst. Biol.">
        <title>Highly accurate genome sequences of Escherichia coli K-12 strains MG1655 and W3110.</title>
        <authorList>
            <person name="Hayashi K."/>
            <person name="Morooka N."/>
            <person name="Yamamoto Y."/>
            <person name="Fujita K."/>
            <person name="Isono K."/>
            <person name="Choi S."/>
            <person name="Ohtsubo E."/>
            <person name="Baba T."/>
            <person name="Wanner B.L."/>
            <person name="Mori H."/>
            <person name="Horiuchi T."/>
        </authorList>
    </citation>
    <scope>NUCLEOTIDE SEQUENCE [LARGE SCALE GENOMIC DNA]</scope>
    <source>
        <strain>K12 / W3110 / ATCC 27325 / DSM 5911</strain>
    </source>
</reference>
<reference key="3">
    <citation type="journal article" date="2005" name="FEMS Microbiol. Rev.">
        <title>Enzyme genomics: application of general enzymatic screens to discover new enzymes.</title>
        <authorList>
            <person name="Kuznetsova E."/>
            <person name="Proudfoot M."/>
            <person name="Sanders S.A."/>
            <person name="Reinking J."/>
            <person name="Savchenko A."/>
            <person name="Arrowsmith C.H."/>
            <person name="Edwards A.M."/>
            <person name="Yakunin A.F."/>
        </authorList>
    </citation>
    <scope>FUNCTION</scope>
</reference>
<name>YPFH_ECOLI</name>
<protein>
    <recommendedName>
        <fullName>Esterase YpfH</fullName>
        <ecNumber>3.1.-.-</ecNumber>
    </recommendedName>
</protein>
<proteinExistence type="inferred from homology"/>
<feature type="chain" id="PRO_0000102276" description="Esterase YpfH">
    <location>
        <begin position="1"/>
        <end position="232"/>
    </location>
</feature>
<feature type="active site" description="Charge relay system" evidence="1">
    <location>
        <position position="111"/>
    </location>
</feature>
<feature type="active site" description="Charge relay system" evidence="1">
    <location>
        <position position="159"/>
    </location>
</feature>
<feature type="active site" description="Charge relay system" evidence="1">
    <location>
        <position position="191"/>
    </location>
</feature>
<organism>
    <name type="scientific">Escherichia coli (strain K12)</name>
    <dbReference type="NCBI Taxonomy" id="83333"/>
    <lineage>
        <taxon>Bacteria</taxon>
        <taxon>Pseudomonadati</taxon>
        <taxon>Pseudomonadota</taxon>
        <taxon>Gammaproteobacteria</taxon>
        <taxon>Enterobacterales</taxon>
        <taxon>Enterobacteriaceae</taxon>
        <taxon>Escherichia</taxon>
    </lineage>
</organism>
<evidence type="ECO:0000250" key="1"/>
<evidence type="ECO:0000269" key="2">
    <source>
    </source>
</evidence>
<evidence type="ECO:0000305" key="3"/>
<comment type="function">
    <text evidence="2">Displays esterase activity toward palmitoyl-CoA and pNP-butyrate.</text>
</comment>
<comment type="similarity">
    <text evidence="3">Belongs to the AB hydrolase superfamily. AB hydrolase 2 family.</text>
</comment>